<feature type="chain" id="PRO_0000359066" description="Acetyl-coenzyme A carboxylase carboxyl transferase subunit beta">
    <location>
        <begin position="1"/>
        <end position="304"/>
    </location>
</feature>
<feature type="domain" description="CoA carboxyltransferase N-terminal" evidence="2">
    <location>
        <begin position="23"/>
        <end position="292"/>
    </location>
</feature>
<feature type="zinc finger region" description="C4-type" evidence="1">
    <location>
        <begin position="27"/>
        <end position="49"/>
    </location>
</feature>
<feature type="region of interest" description="Disordered" evidence="3">
    <location>
        <begin position="284"/>
        <end position="304"/>
    </location>
</feature>
<feature type="compositionally biased region" description="Pro residues" evidence="3">
    <location>
        <begin position="295"/>
        <end position="304"/>
    </location>
</feature>
<feature type="binding site" evidence="1">
    <location>
        <position position="27"/>
    </location>
    <ligand>
        <name>Zn(2+)</name>
        <dbReference type="ChEBI" id="CHEBI:29105"/>
    </ligand>
</feature>
<feature type="binding site" evidence="1">
    <location>
        <position position="30"/>
    </location>
    <ligand>
        <name>Zn(2+)</name>
        <dbReference type="ChEBI" id="CHEBI:29105"/>
    </ligand>
</feature>
<feature type="binding site" evidence="1">
    <location>
        <position position="46"/>
    </location>
    <ligand>
        <name>Zn(2+)</name>
        <dbReference type="ChEBI" id="CHEBI:29105"/>
    </ligand>
</feature>
<feature type="binding site" evidence="1">
    <location>
        <position position="49"/>
    </location>
    <ligand>
        <name>Zn(2+)</name>
        <dbReference type="ChEBI" id="CHEBI:29105"/>
    </ligand>
</feature>
<proteinExistence type="inferred from homology"/>
<organism>
    <name type="scientific">Shigella flexneri</name>
    <dbReference type="NCBI Taxonomy" id="623"/>
    <lineage>
        <taxon>Bacteria</taxon>
        <taxon>Pseudomonadati</taxon>
        <taxon>Pseudomonadota</taxon>
        <taxon>Gammaproteobacteria</taxon>
        <taxon>Enterobacterales</taxon>
        <taxon>Enterobacteriaceae</taxon>
        <taxon>Shigella</taxon>
    </lineage>
</organism>
<keyword id="KW-0067">ATP-binding</keyword>
<keyword id="KW-0963">Cytoplasm</keyword>
<keyword id="KW-0275">Fatty acid biosynthesis</keyword>
<keyword id="KW-0276">Fatty acid metabolism</keyword>
<keyword id="KW-0444">Lipid biosynthesis</keyword>
<keyword id="KW-0443">Lipid metabolism</keyword>
<keyword id="KW-0479">Metal-binding</keyword>
<keyword id="KW-0547">Nucleotide-binding</keyword>
<keyword id="KW-1185">Reference proteome</keyword>
<keyword id="KW-0808">Transferase</keyword>
<keyword id="KW-0862">Zinc</keyword>
<keyword id="KW-0863">Zinc-finger</keyword>
<dbReference type="EC" id="2.1.3.15" evidence="1"/>
<dbReference type="EMBL" id="AE005674">
    <property type="protein sequence ID" value="AAN43905.2"/>
    <property type="molecule type" value="Genomic_DNA"/>
</dbReference>
<dbReference type="EMBL" id="AE014073">
    <property type="protein sequence ID" value="AAP17723.1"/>
    <property type="molecule type" value="Genomic_DNA"/>
</dbReference>
<dbReference type="RefSeq" id="NP_708198.2">
    <property type="nucleotide sequence ID" value="NC_004337.2"/>
</dbReference>
<dbReference type="RefSeq" id="WP_000118391.1">
    <property type="nucleotide sequence ID" value="NZ_WPGW01000016.1"/>
</dbReference>
<dbReference type="SMR" id="Q83KA2"/>
<dbReference type="STRING" id="198214.SF2392"/>
<dbReference type="PaxDb" id="198214-SF2392"/>
<dbReference type="GeneID" id="1025558"/>
<dbReference type="KEGG" id="sfl:SF2392"/>
<dbReference type="KEGG" id="sfx:S2527"/>
<dbReference type="PATRIC" id="fig|198214.7.peg.2859"/>
<dbReference type="HOGENOM" id="CLU_015486_1_0_6"/>
<dbReference type="UniPathway" id="UPA00655">
    <property type="reaction ID" value="UER00711"/>
</dbReference>
<dbReference type="Proteomes" id="UP000001006">
    <property type="component" value="Chromosome"/>
</dbReference>
<dbReference type="Proteomes" id="UP000002673">
    <property type="component" value="Chromosome"/>
</dbReference>
<dbReference type="GO" id="GO:0009329">
    <property type="term" value="C:acetate CoA-transferase complex"/>
    <property type="evidence" value="ECO:0007669"/>
    <property type="project" value="TreeGrafter"/>
</dbReference>
<dbReference type="GO" id="GO:0003989">
    <property type="term" value="F:acetyl-CoA carboxylase activity"/>
    <property type="evidence" value="ECO:0007669"/>
    <property type="project" value="InterPro"/>
</dbReference>
<dbReference type="GO" id="GO:0005524">
    <property type="term" value="F:ATP binding"/>
    <property type="evidence" value="ECO:0007669"/>
    <property type="project" value="UniProtKB-KW"/>
</dbReference>
<dbReference type="GO" id="GO:0016743">
    <property type="term" value="F:carboxyl- or carbamoyltransferase activity"/>
    <property type="evidence" value="ECO:0007669"/>
    <property type="project" value="UniProtKB-UniRule"/>
</dbReference>
<dbReference type="GO" id="GO:0008270">
    <property type="term" value="F:zinc ion binding"/>
    <property type="evidence" value="ECO:0007669"/>
    <property type="project" value="UniProtKB-UniRule"/>
</dbReference>
<dbReference type="GO" id="GO:0006633">
    <property type="term" value="P:fatty acid biosynthetic process"/>
    <property type="evidence" value="ECO:0007669"/>
    <property type="project" value="UniProtKB-KW"/>
</dbReference>
<dbReference type="GO" id="GO:2001295">
    <property type="term" value="P:malonyl-CoA biosynthetic process"/>
    <property type="evidence" value="ECO:0007669"/>
    <property type="project" value="UniProtKB-UniRule"/>
</dbReference>
<dbReference type="FunFam" id="3.90.226.10:FF:000013">
    <property type="entry name" value="Acetyl-coenzyme A carboxylase carboxyl transferase subunit beta"/>
    <property type="match status" value="1"/>
</dbReference>
<dbReference type="Gene3D" id="3.90.226.10">
    <property type="entry name" value="2-enoyl-CoA Hydratase, Chain A, domain 1"/>
    <property type="match status" value="1"/>
</dbReference>
<dbReference type="HAMAP" id="MF_01395">
    <property type="entry name" value="AcetylCoA_CT_beta"/>
    <property type="match status" value="1"/>
</dbReference>
<dbReference type="InterPro" id="IPR034733">
    <property type="entry name" value="AcCoA_carboxyl_beta"/>
</dbReference>
<dbReference type="InterPro" id="IPR000438">
    <property type="entry name" value="Acetyl_CoA_COase_Trfase_b_su"/>
</dbReference>
<dbReference type="InterPro" id="IPR029045">
    <property type="entry name" value="ClpP/crotonase-like_dom_sf"/>
</dbReference>
<dbReference type="InterPro" id="IPR011762">
    <property type="entry name" value="COA_CT_N"/>
</dbReference>
<dbReference type="InterPro" id="IPR041010">
    <property type="entry name" value="Znf-ACC"/>
</dbReference>
<dbReference type="NCBIfam" id="TIGR00515">
    <property type="entry name" value="accD"/>
    <property type="match status" value="1"/>
</dbReference>
<dbReference type="PANTHER" id="PTHR42995">
    <property type="entry name" value="ACETYL-COENZYME A CARBOXYLASE CARBOXYL TRANSFERASE SUBUNIT BETA, CHLOROPLASTIC"/>
    <property type="match status" value="1"/>
</dbReference>
<dbReference type="PANTHER" id="PTHR42995:SF5">
    <property type="entry name" value="ACETYL-COENZYME A CARBOXYLASE CARBOXYL TRANSFERASE SUBUNIT BETA, CHLOROPLASTIC"/>
    <property type="match status" value="1"/>
</dbReference>
<dbReference type="Pfam" id="PF01039">
    <property type="entry name" value="Carboxyl_trans"/>
    <property type="match status" value="1"/>
</dbReference>
<dbReference type="Pfam" id="PF17848">
    <property type="entry name" value="Zn_ribbon_ACC"/>
    <property type="match status" value="1"/>
</dbReference>
<dbReference type="PRINTS" id="PR01070">
    <property type="entry name" value="ACCCTRFRASEB"/>
</dbReference>
<dbReference type="SUPFAM" id="SSF52096">
    <property type="entry name" value="ClpP/crotonase"/>
    <property type="match status" value="1"/>
</dbReference>
<dbReference type="PROSITE" id="PS50980">
    <property type="entry name" value="COA_CT_NTER"/>
    <property type="match status" value="1"/>
</dbReference>
<accession>Q83KA2</accession>
<accession>Q7UC50</accession>
<name>ACCD_SHIFL</name>
<evidence type="ECO:0000255" key="1">
    <source>
        <dbReference type="HAMAP-Rule" id="MF_01395"/>
    </source>
</evidence>
<evidence type="ECO:0000255" key="2">
    <source>
        <dbReference type="PROSITE-ProRule" id="PRU01136"/>
    </source>
</evidence>
<evidence type="ECO:0000256" key="3">
    <source>
        <dbReference type="SAM" id="MobiDB-lite"/>
    </source>
</evidence>
<reference key="1">
    <citation type="journal article" date="2002" name="Nucleic Acids Res.">
        <title>Genome sequence of Shigella flexneri 2a: insights into pathogenicity through comparison with genomes of Escherichia coli K12 and O157.</title>
        <authorList>
            <person name="Jin Q."/>
            <person name="Yuan Z."/>
            <person name="Xu J."/>
            <person name="Wang Y."/>
            <person name="Shen Y."/>
            <person name="Lu W."/>
            <person name="Wang J."/>
            <person name="Liu H."/>
            <person name="Yang J."/>
            <person name="Yang F."/>
            <person name="Zhang X."/>
            <person name="Zhang J."/>
            <person name="Yang G."/>
            <person name="Wu H."/>
            <person name="Qu D."/>
            <person name="Dong J."/>
            <person name="Sun L."/>
            <person name="Xue Y."/>
            <person name="Zhao A."/>
            <person name="Gao Y."/>
            <person name="Zhu J."/>
            <person name="Kan B."/>
            <person name="Ding K."/>
            <person name="Chen S."/>
            <person name="Cheng H."/>
            <person name="Yao Z."/>
            <person name="He B."/>
            <person name="Chen R."/>
            <person name="Ma D."/>
            <person name="Qiang B."/>
            <person name="Wen Y."/>
            <person name="Hou Y."/>
            <person name="Yu J."/>
        </authorList>
    </citation>
    <scope>NUCLEOTIDE SEQUENCE [LARGE SCALE GENOMIC DNA]</scope>
    <source>
        <strain>301 / Serotype 2a</strain>
    </source>
</reference>
<reference key="2">
    <citation type="journal article" date="2003" name="Infect. Immun.">
        <title>Complete genome sequence and comparative genomics of Shigella flexneri serotype 2a strain 2457T.</title>
        <authorList>
            <person name="Wei J."/>
            <person name="Goldberg M.B."/>
            <person name="Burland V."/>
            <person name="Venkatesan M.M."/>
            <person name="Deng W."/>
            <person name="Fournier G."/>
            <person name="Mayhew G.F."/>
            <person name="Plunkett G. III"/>
            <person name="Rose D.J."/>
            <person name="Darling A."/>
            <person name="Mau B."/>
            <person name="Perna N.T."/>
            <person name="Payne S.M."/>
            <person name="Runyen-Janecky L.J."/>
            <person name="Zhou S."/>
            <person name="Schwartz D.C."/>
            <person name="Blattner F.R."/>
        </authorList>
    </citation>
    <scope>NUCLEOTIDE SEQUENCE [LARGE SCALE GENOMIC DNA]</scope>
    <source>
        <strain>ATCC 700930 / 2457T / Serotype 2a</strain>
    </source>
</reference>
<comment type="function">
    <text evidence="1">Component of the acetyl coenzyme A carboxylase (ACC) complex. Biotin carboxylase (BC) catalyzes the carboxylation of biotin on its carrier protein (BCCP) and then the CO(2) group is transferred by the transcarboxylase to acetyl-CoA to form malonyl-CoA.</text>
</comment>
<comment type="catalytic activity">
    <reaction evidence="1">
        <text>N(6)-carboxybiotinyl-L-lysyl-[protein] + acetyl-CoA = N(6)-biotinyl-L-lysyl-[protein] + malonyl-CoA</text>
        <dbReference type="Rhea" id="RHEA:54728"/>
        <dbReference type="Rhea" id="RHEA-COMP:10505"/>
        <dbReference type="Rhea" id="RHEA-COMP:10506"/>
        <dbReference type="ChEBI" id="CHEBI:57288"/>
        <dbReference type="ChEBI" id="CHEBI:57384"/>
        <dbReference type="ChEBI" id="CHEBI:83144"/>
        <dbReference type="ChEBI" id="CHEBI:83145"/>
        <dbReference type="EC" id="2.1.3.15"/>
    </reaction>
</comment>
<comment type="cofactor">
    <cofactor evidence="1">
        <name>Zn(2+)</name>
        <dbReference type="ChEBI" id="CHEBI:29105"/>
    </cofactor>
    <text evidence="1">Binds 1 zinc ion per subunit.</text>
</comment>
<comment type="pathway">
    <text evidence="1">Lipid metabolism; malonyl-CoA biosynthesis; malonyl-CoA from acetyl-CoA: step 1/1.</text>
</comment>
<comment type="subunit">
    <text evidence="1">Acetyl-CoA carboxylase is a heterohexamer composed of biotin carboxyl carrier protein (AccB), biotin carboxylase (AccC) and two subunits each of ACCase subunit alpha (AccA) and ACCase subunit beta (AccD).</text>
</comment>
<comment type="subcellular location">
    <subcellularLocation>
        <location evidence="1">Cytoplasm</location>
    </subcellularLocation>
</comment>
<comment type="similarity">
    <text evidence="1">Belongs to the AccD/PCCB family.</text>
</comment>
<gene>
    <name evidence="1" type="primary">accD</name>
    <name type="ordered locus">SF2392</name>
    <name type="ordered locus">S2527</name>
</gene>
<sequence>MSWIERIKSNITPTRKASIPEGVWTKCDSCGQVLYRAELERNLEVCPKCDHHMRMTARNRLHSLLDEGSLVELGSELEPKDELKFRDSKKYKDRLASAQKETGEKDALVVMKGTLYGMPVVAAAFEFAFMGGSMGSVVGARFVRAVEQAQEDNCPLICFSASGGARMQEALMSLMQMAKTSAALAKMQERGLPYISVLTDPTMGGVSASFAMLGDLNIAEPKALIGFAGPRVIEQTVREKLPPRFQRSEFLIEKGAIDMIVRRPEMRLKLASILAKLMNLPAPNPEAPREGVVVPPVPDQEPEA</sequence>
<protein>
    <recommendedName>
        <fullName evidence="1">Acetyl-coenzyme A carboxylase carboxyl transferase subunit beta</fullName>
        <shortName evidence="1">ACCase subunit beta</shortName>
        <shortName evidence="1">Acetyl-CoA carboxylase carboxyltransferase subunit beta</shortName>
        <ecNumber evidence="1">2.1.3.15</ecNumber>
    </recommendedName>
</protein>